<comment type="function">
    <text evidence="1">Binds to G-rich structures in 28S rRNA and in mRNAs. Plays a regulatory role in the translation apparatus; inhibits cell-free translation of mRNAs (By similarity).</text>
</comment>
<comment type="similarity">
    <text evidence="2">Belongs to the universal ribosomal protein uL30 family.</text>
</comment>
<accession>P32100</accession>
<accession>Q541C8</accession>
<accession>Q9VL30</accession>
<name>RL7_DROME</name>
<organism>
    <name type="scientific">Drosophila melanogaster</name>
    <name type="common">Fruit fly</name>
    <dbReference type="NCBI Taxonomy" id="7227"/>
    <lineage>
        <taxon>Eukaryota</taxon>
        <taxon>Metazoa</taxon>
        <taxon>Ecdysozoa</taxon>
        <taxon>Arthropoda</taxon>
        <taxon>Hexapoda</taxon>
        <taxon>Insecta</taxon>
        <taxon>Pterygota</taxon>
        <taxon>Neoptera</taxon>
        <taxon>Endopterygota</taxon>
        <taxon>Diptera</taxon>
        <taxon>Brachycera</taxon>
        <taxon>Muscomorpha</taxon>
        <taxon>Ephydroidea</taxon>
        <taxon>Drosophilidae</taxon>
        <taxon>Drosophila</taxon>
        <taxon>Sophophora</taxon>
    </lineage>
</organism>
<sequence>MPAPVVKKPAAKKLPAVPESKLKFSKKQISKRVAESKRRLKKAAVIALRKKENLVRAEKYQNEYIKAEQREIKLRRLAKKRNQFYVPAEAKLAFVVRIRGINKVAPKVRKVLQLFRLRQINNGVFIKLNKATINMLRIAEPYITWGYPNLKSVRELIYKRGFVKHNRQRVPITDNFVIERKLRQAHQIQCVEDLVHEIFTVGPNFKYASNFLWPFKLNTPTGGWRKKANHYVNGGDFGNREDQINRLLRKMV</sequence>
<dbReference type="EMBL" id="AE014134">
    <property type="protein sequence ID" value="AAF52868.1"/>
    <property type="molecule type" value="Genomic_DNA"/>
</dbReference>
<dbReference type="EMBL" id="AY089648">
    <property type="protein sequence ID" value="AAL90386.1"/>
    <property type="molecule type" value="mRNA"/>
</dbReference>
<dbReference type="EMBL" id="X15109">
    <property type="protein sequence ID" value="CAA33207.1"/>
    <property type="molecule type" value="mRNA"/>
</dbReference>
<dbReference type="PIR" id="S21500">
    <property type="entry name" value="S21500"/>
</dbReference>
<dbReference type="RefSeq" id="NP_001285794.1">
    <property type="nucleotide sequence ID" value="NM_001298865.1"/>
</dbReference>
<dbReference type="RefSeq" id="NP_523531.1">
    <property type="nucleotide sequence ID" value="NM_078807.3"/>
</dbReference>
<dbReference type="PDB" id="4V6W">
    <property type="method" value="EM"/>
    <property type="resolution" value="6.00 A"/>
    <property type="chains" value="CF=1-252"/>
</dbReference>
<dbReference type="PDB" id="6XU6">
    <property type="method" value="EM"/>
    <property type="resolution" value="3.50 A"/>
    <property type="chains" value="CF=30-252"/>
</dbReference>
<dbReference type="PDB" id="6XU7">
    <property type="method" value="EM"/>
    <property type="resolution" value="4.90 A"/>
    <property type="chains" value="CF=27-252"/>
</dbReference>
<dbReference type="PDB" id="6XU8">
    <property type="method" value="EM"/>
    <property type="resolution" value="3.00 A"/>
    <property type="chains" value="CF=27-252"/>
</dbReference>
<dbReference type="PDBsum" id="4V6W"/>
<dbReference type="PDBsum" id="6XU6"/>
<dbReference type="PDBsum" id="6XU7"/>
<dbReference type="PDBsum" id="6XU8"/>
<dbReference type="EMDB" id="EMD-10622"/>
<dbReference type="EMDB" id="EMD-10623"/>
<dbReference type="EMDB" id="EMD-10624"/>
<dbReference type="SMR" id="P32100"/>
<dbReference type="BioGRID" id="60443">
    <property type="interactions" value="107"/>
</dbReference>
<dbReference type="DIP" id="DIP-18002N"/>
<dbReference type="FunCoup" id="P32100">
    <property type="interactions" value="1275"/>
</dbReference>
<dbReference type="IntAct" id="P32100">
    <property type="interactions" value="3"/>
</dbReference>
<dbReference type="MINT" id="P32100"/>
<dbReference type="STRING" id="7227.FBpp0310250"/>
<dbReference type="PaxDb" id="7227-FBpp0079536"/>
<dbReference type="DNASU" id="34352"/>
<dbReference type="EnsemblMetazoa" id="FBtr0079946">
    <property type="protein sequence ID" value="FBpp0079536"/>
    <property type="gene ID" value="FBgn0005593"/>
</dbReference>
<dbReference type="EnsemblMetazoa" id="FBtr0343653">
    <property type="protein sequence ID" value="FBpp0310250"/>
    <property type="gene ID" value="FBgn0005593"/>
</dbReference>
<dbReference type="GeneID" id="34352"/>
<dbReference type="KEGG" id="dme:Dmel_CG4897"/>
<dbReference type="AGR" id="FB:FBgn0005593"/>
<dbReference type="CTD" id="6129"/>
<dbReference type="FlyBase" id="FBgn0005593">
    <property type="gene designation" value="RpL7"/>
</dbReference>
<dbReference type="VEuPathDB" id="VectorBase:FBgn0005593"/>
<dbReference type="eggNOG" id="KOG3184">
    <property type="taxonomic scope" value="Eukaryota"/>
</dbReference>
<dbReference type="HOGENOM" id="CLU_055156_0_2_1"/>
<dbReference type="InParanoid" id="P32100"/>
<dbReference type="OMA" id="SYYVDAQ"/>
<dbReference type="OrthoDB" id="28644at2759"/>
<dbReference type="PhylomeDB" id="P32100"/>
<dbReference type="Reactome" id="R-DME-156827">
    <property type="pathway name" value="L13a-mediated translational silencing of Ceruloplasmin expression"/>
</dbReference>
<dbReference type="Reactome" id="R-DME-1799339">
    <property type="pathway name" value="SRP-dependent cotranslational protein targeting to membrane"/>
</dbReference>
<dbReference type="Reactome" id="R-DME-72689">
    <property type="pathway name" value="Formation of a pool of free 40S subunits"/>
</dbReference>
<dbReference type="Reactome" id="R-DME-72706">
    <property type="pathway name" value="GTP hydrolysis and joining of the 60S ribosomal subunit"/>
</dbReference>
<dbReference type="Reactome" id="R-DME-975956">
    <property type="pathway name" value="Nonsense Mediated Decay (NMD) independent of the Exon Junction Complex (EJC)"/>
</dbReference>
<dbReference type="Reactome" id="R-DME-975957">
    <property type="pathway name" value="Nonsense Mediated Decay (NMD) enhanced by the Exon Junction Complex (EJC)"/>
</dbReference>
<dbReference type="SignaLink" id="P32100"/>
<dbReference type="BioGRID-ORCS" id="34352">
    <property type="hits" value="2 hits in 3 CRISPR screens"/>
</dbReference>
<dbReference type="ChiTaRS" id="RpL7">
    <property type="organism name" value="fly"/>
</dbReference>
<dbReference type="GenomeRNAi" id="34352"/>
<dbReference type="PRO" id="PR:P32100"/>
<dbReference type="Proteomes" id="UP000000803">
    <property type="component" value="Chromosome 2L"/>
</dbReference>
<dbReference type="Bgee" id="FBgn0005593">
    <property type="expression patterns" value="Expressed in eye disc (Drosophila) and 295 other cell types or tissues"/>
</dbReference>
<dbReference type="ExpressionAtlas" id="P32100">
    <property type="expression patterns" value="baseline and differential"/>
</dbReference>
<dbReference type="GO" id="GO:0022625">
    <property type="term" value="C:cytosolic large ribosomal subunit"/>
    <property type="evidence" value="ECO:0000318"/>
    <property type="project" value="GO_Central"/>
</dbReference>
<dbReference type="GO" id="GO:0022626">
    <property type="term" value="C:cytosolic ribosome"/>
    <property type="evidence" value="ECO:0000314"/>
    <property type="project" value="FlyBase"/>
</dbReference>
<dbReference type="GO" id="GO:0003723">
    <property type="term" value="F:RNA binding"/>
    <property type="evidence" value="ECO:0000318"/>
    <property type="project" value="GO_Central"/>
</dbReference>
<dbReference type="GO" id="GO:0003735">
    <property type="term" value="F:structural constituent of ribosome"/>
    <property type="evidence" value="ECO:0000314"/>
    <property type="project" value="FlyBase"/>
</dbReference>
<dbReference type="GO" id="GO:0002181">
    <property type="term" value="P:cytoplasmic translation"/>
    <property type="evidence" value="ECO:0000304"/>
    <property type="project" value="FlyBase"/>
</dbReference>
<dbReference type="GO" id="GO:0000463">
    <property type="term" value="P:maturation of LSU-rRNA from tricistronic rRNA transcript (SSU-rRNA, 5.8S rRNA, LSU-rRNA)"/>
    <property type="evidence" value="ECO:0000318"/>
    <property type="project" value="GO_Central"/>
</dbReference>
<dbReference type="GO" id="GO:0035073">
    <property type="term" value="P:pupariation"/>
    <property type="evidence" value="ECO:0000315"/>
    <property type="project" value="FlyBase"/>
</dbReference>
<dbReference type="CDD" id="cd01657">
    <property type="entry name" value="Ribosomal_L7_archeal_euk"/>
    <property type="match status" value="1"/>
</dbReference>
<dbReference type="FunFam" id="1.10.15.30:FF:000001">
    <property type="entry name" value="60S ribosomal protein L7"/>
    <property type="match status" value="1"/>
</dbReference>
<dbReference type="FunFam" id="3.30.1390.20:FF:000002">
    <property type="entry name" value="60S ribosomal protein L7"/>
    <property type="match status" value="1"/>
</dbReference>
<dbReference type="FunFam" id="3.30.1390.20:FF:000003">
    <property type="entry name" value="60S ribosomal protein L7"/>
    <property type="match status" value="1"/>
</dbReference>
<dbReference type="Gene3D" id="1.10.15.30">
    <property type="match status" value="1"/>
</dbReference>
<dbReference type="Gene3D" id="3.30.1390.20">
    <property type="entry name" value="Ribosomal protein L30, ferredoxin-like fold domain"/>
    <property type="match status" value="1"/>
</dbReference>
<dbReference type="InterPro" id="IPR036919">
    <property type="entry name" value="Ribo_uL30_ferredoxin-like_sf"/>
</dbReference>
<dbReference type="InterPro" id="IPR039699">
    <property type="entry name" value="Ribosomal_uL30"/>
</dbReference>
<dbReference type="InterPro" id="IPR018038">
    <property type="entry name" value="Ribosomal_uL30_CS"/>
</dbReference>
<dbReference type="InterPro" id="IPR005998">
    <property type="entry name" value="Ribosomal_uL30_euk"/>
</dbReference>
<dbReference type="InterPro" id="IPR035808">
    <property type="entry name" value="Ribosomal_uL30_euk_arc"/>
</dbReference>
<dbReference type="InterPro" id="IPR016082">
    <property type="entry name" value="Ribosomal_uL30_ferredoxin-like"/>
</dbReference>
<dbReference type="InterPro" id="IPR012988">
    <property type="entry name" value="Ribosomal_uL30_N_euk"/>
</dbReference>
<dbReference type="NCBIfam" id="TIGR01310">
    <property type="entry name" value="uL30_euk"/>
    <property type="match status" value="1"/>
</dbReference>
<dbReference type="PANTHER" id="PTHR11524">
    <property type="entry name" value="60S RIBOSOMAL PROTEIN L7"/>
    <property type="match status" value="1"/>
</dbReference>
<dbReference type="PANTHER" id="PTHR11524:SF16">
    <property type="entry name" value="LARGE RIBOSOMAL SUBUNIT PROTEIN UL30"/>
    <property type="match status" value="1"/>
</dbReference>
<dbReference type="Pfam" id="PF00327">
    <property type="entry name" value="Ribosomal_L30"/>
    <property type="match status" value="1"/>
</dbReference>
<dbReference type="Pfam" id="PF08079">
    <property type="entry name" value="Ribosomal_L30_N"/>
    <property type="match status" value="1"/>
</dbReference>
<dbReference type="SUPFAM" id="SSF55129">
    <property type="entry name" value="Ribosomal protein L30p/L7e"/>
    <property type="match status" value="1"/>
</dbReference>
<dbReference type="PROSITE" id="PS00634">
    <property type="entry name" value="RIBOSOMAL_L30"/>
    <property type="match status" value="1"/>
</dbReference>
<reference key="1">
    <citation type="journal article" date="2000" name="Science">
        <title>The genome sequence of Drosophila melanogaster.</title>
        <authorList>
            <person name="Adams M.D."/>
            <person name="Celniker S.E."/>
            <person name="Holt R.A."/>
            <person name="Evans C.A."/>
            <person name="Gocayne J.D."/>
            <person name="Amanatides P.G."/>
            <person name="Scherer S.E."/>
            <person name="Li P.W."/>
            <person name="Hoskins R.A."/>
            <person name="Galle R.F."/>
            <person name="George R.A."/>
            <person name="Lewis S.E."/>
            <person name="Richards S."/>
            <person name="Ashburner M."/>
            <person name="Henderson S.N."/>
            <person name="Sutton G.G."/>
            <person name="Wortman J.R."/>
            <person name="Yandell M.D."/>
            <person name="Zhang Q."/>
            <person name="Chen L.X."/>
            <person name="Brandon R.C."/>
            <person name="Rogers Y.-H.C."/>
            <person name="Blazej R.G."/>
            <person name="Champe M."/>
            <person name="Pfeiffer B.D."/>
            <person name="Wan K.H."/>
            <person name="Doyle C."/>
            <person name="Baxter E.G."/>
            <person name="Helt G."/>
            <person name="Nelson C.R."/>
            <person name="Miklos G.L.G."/>
            <person name="Abril J.F."/>
            <person name="Agbayani A."/>
            <person name="An H.-J."/>
            <person name="Andrews-Pfannkoch C."/>
            <person name="Baldwin D."/>
            <person name="Ballew R.M."/>
            <person name="Basu A."/>
            <person name="Baxendale J."/>
            <person name="Bayraktaroglu L."/>
            <person name="Beasley E.M."/>
            <person name="Beeson K.Y."/>
            <person name="Benos P.V."/>
            <person name="Berman B.P."/>
            <person name="Bhandari D."/>
            <person name="Bolshakov S."/>
            <person name="Borkova D."/>
            <person name="Botchan M.R."/>
            <person name="Bouck J."/>
            <person name="Brokstein P."/>
            <person name="Brottier P."/>
            <person name="Burtis K.C."/>
            <person name="Busam D.A."/>
            <person name="Butler H."/>
            <person name="Cadieu E."/>
            <person name="Center A."/>
            <person name="Chandra I."/>
            <person name="Cherry J.M."/>
            <person name="Cawley S."/>
            <person name="Dahlke C."/>
            <person name="Davenport L.B."/>
            <person name="Davies P."/>
            <person name="de Pablos B."/>
            <person name="Delcher A."/>
            <person name="Deng Z."/>
            <person name="Mays A.D."/>
            <person name="Dew I."/>
            <person name="Dietz S.M."/>
            <person name="Dodson K."/>
            <person name="Doup L.E."/>
            <person name="Downes M."/>
            <person name="Dugan-Rocha S."/>
            <person name="Dunkov B.C."/>
            <person name="Dunn P."/>
            <person name="Durbin K.J."/>
            <person name="Evangelista C.C."/>
            <person name="Ferraz C."/>
            <person name="Ferriera S."/>
            <person name="Fleischmann W."/>
            <person name="Fosler C."/>
            <person name="Gabrielian A.E."/>
            <person name="Garg N.S."/>
            <person name="Gelbart W.M."/>
            <person name="Glasser K."/>
            <person name="Glodek A."/>
            <person name="Gong F."/>
            <person name="Gorrell J.H."/>
            <person name="Gu Z."/>
            <person name="Guan P."/>
            <person name="Harris M."/>
            <person name="Harris N.L."/>
            <person name="Harvey D.A."/>
            <person name="Heiman T.J."/>
            <person name="Hernandez J.R."/>
            <person name="Houck J."/>
            <person name="Hostin D."/>
            <person name="Houston K.A."/>
            <person name="Howland T.J."/>
            <person name="Wei M.-H."/>
            <person name="Ibegwam C."/>
            <person name="Jalali M."/>
            <person name="Kalush F."/>
            <person name="Karpen G.H."/>
            <person name="Ke Z."/>
            <person name="Kennison J.A."/>
            <person name="Ketchum K.A."/>
            <person name="Kimmel B.E."/>
            <person name="Kodira C.D."/>
            <person name="Kraft C.L."/>
            <person name="Kravitz S."/>
            <person name="Kulp D."/>
            <person name="Lai Z."/>
            <person name="Lasko P."/>
            <person name="Lei Y."/>
            <person name="Levitsky A.A."/>
            <person name="Li J.H."/>
            <person name="Li Z."/>
            <person name="Liang Y."/>
            <person name="Lin X."/>
            <person name="Liu X."/>
            <person name="Mattei B."/>
            <person name="McIntosh T.C."/>
            <person name="McLeod M.P."/>
            <person name="McPherson D."/>
            <person name="Merkulov G."/>
            <person name="Milshina N.V."/>
            <person name="Mobarry C."/>
            <person name="Morris J."/>
            <person name="Moshrefi A."/>
            <person name="Mount S.M."/>
            <person name="Moy M."/>
            <person name="Murphy B."/>
            <person name="Murphy L."/>
            <person name="Muzny D.M."/>
            <person name="Nelson D.L."/>
            <person name="Nelson D.R."/>
            <person name="Nelson K.A."/>
            <person name="Nixon K."/>
            <person name="Nusskern D.R."/>
            <person name="Pacleb J.M."/>
            <person name="Palazzolo M."/>
            <person name="Pittman G.S."/>
            <person name="Pan S."/>
            <person name="Pollard J."/>
            <person name="Puri V."/>
            <person name="Reese M.G."/>
            <person name="Reinert K."/>
            <person name="Remington K."/>
            <person name="Saunders R.D.C."/>
            <person name="Scheeler F."/>
            <person name="Shen H."/>
            <person name="Shue B.C."/>
            <person name="Siden-Kiamos I."/>
            <person name="Simpson M."/>
            <person name="Skupski M.P."/>
            <person name="Smith T.J."/>
            <person name="Spier E."/>
            <person name="Spradling A.C."/>
            <person name="Stapleton M."/>
            <person name="Strong R."/>
            <person name="Sun E."/>
            <person name="Svirskas R."/>
            <person name="Tector C."/>
            <person name="Turner R."/>
            <person name="Venter E."/>
            <person name="Wang A.H."/>
            <person name="Wang X."/>
            <person name="Wang Z.-Y."/>
            <person name="Wassarman D.A."/>
            <person name="Weinstock G.M."/>
            <person name="Weissenbach J."/>
            <person name="Williams S.M."/>
            <person name="Woodage T."/>
            <person name="Worley K.C."/>
            <person name="Wu D."/>
            <person name="Yang S."/>
            <person name="Yao Q.A."/>
            <person name="Ye J."/>
            <person name="Yeh R.-F."/>
            <person name="Zaveri J.S."/>
            <person name="Zhan M."/>
            <person name="Zhang G."/>
            <person name="Zhao Q."/>
            <person name="Zheng L."/>
            <person name="Zheng X.H."/>
            <person name="Zhong F.N."/>
            <person name="Zhong W."/>
            <person name="Zhou X."/>
            <person name="Zhu S.C."/>
            <person name="Zhu X."/>
            <person name="Smith H.O."/>
            <person name="Gibbs R.A."/>
            <person name="Myers E.W."/>
            <person name="Rubin G.M."/>
            <person name="Venter J.C."/>
        </authorList>
    </citation>
    <scope>NUCLEOTIDE SEQUENCE [LARGE SCALE GENOMIC DNA]</scope>
    <source>
        <strain>Berkeley</strain>
    </source>
</reference>
<reference key="2">
    <citation type="journal article" date="2002" name="Genome Biol.">
        <title>Annotation of the Drosophila melanogaster euchromatic genome: a systematic review.</title>
        <authorList>
            <person name="Misra S."/>
            <person name="Crosby M.A."/>
            <person name="Mungall C.J."/>
            <person name="Matthews B.B."/>
            <person name="Campbell K.S."/>
            <person name="Hradecky P."/>
            <person name="Huang Y."/>
            <person name="Kaminker J.S."/>
            <person name="Millburn G.H."/>
            <person name="Prochnik S.E."/>
            <person name="Smith C.D."/>
            <person name="Tupy J.L."/>
            <person name="Whitfield E.J."/>
            <person name="Bayraktaroglu L."/>
            <person name="Berman B.P."/>
            <person name="Bettencourt B.R."/>
            <person name="Celniker S.E."/>
            <person name="de Grey A.D.N.J."/>
            <person name="Drysdale R.A."/>
            <person name="Harris N.L."/>
            <person name="Richter J."/>
            <person name="Russo S."/>
            <person name="Schroeder A.J."/>
            <person name="Shu S.Q."/>
            <person name="Stapleton M."/>
            <person name="Yamada C."/>
            <person name="Ashburner M."/>
            <person name="Gelbart W.M."/>
            <person name="Rubin G.M."/>
            <person name="Lewis S.E."/>
        </authorList>
    </citation>
    <scope>GENOME REANNOTATION</scope>
    <source>
        <strain>Berkeley</strain>
    </source>
</reference>
<reference key="3">
    <citation type="journal article" date="2002" name="Genome Biol.">
        <title>A Drosophila full-length cDNA resource.</title>
        <authorList>
            <person name="Stapleton M."/>
            <person name="Carlson J.W."/>
            <person name="Brokstein P."/>
            <person name="Yu C."/>
            <person name="Champe M."/>
            <person name="George R.A."/>
            <person name="Guarin H."/>
            <person name="Kronmiller B."/>
            <person name="Pacleb J.M."/>
            <person name="Park S."/>
            <person name="Wan K.H."/>
            <person name="Rubin G.M."/>
            <person name="Celniker S.E."/>
        </authorList>
    </citation>
    <scope>NUCLEOTIDE SEQUENCE [LARGE SCALE MRNA]</scope>
    <source>
        <strain>Berkeley</strain>
        <tissue>Head</tissue>
    </source>
</reference>
<reference key="4">
    <citation type="submission" date="1989-04" db="EMBL/GenBank/DDBJ databases">
        <authorList>
            <person name="Quan F."/>
            <person name="Forte M.A."/>
        </authorList>
    </citation>
    <scope>NUCLEOTIDE SEQUENCE OF 14-252</scope>
    <source>
        <strain>Canton-S</strain>
    </source>
</reference>
<reference key="5">
    <citation type="journal article" date="2013" name="Nature">
        <title>Structures of the human and Drosophila 80S ribosome.</title>
        <authorList>
            <person name="Anger A.M."/>
            <person name="Armache J.P."/>
            <person name="Berninghausen O."/>
            <person name="Habeck M."/>
            <person name="Subklewe M."/>
            <person name="Wilson D.N."/>
            <person name="Beckmann R."/>
        </authorList>
    </citation>
    <scope>STRUCTURE BY ELECTRON MICROSCOPY (6.0 ANGSTROMS) OF THE 80S RIBOSOME</scope>
</reference>
<evidence type="ECO:0000250" key="1"/>
<evidence type="ECO:0000305" key="2"/>
<proteinExistence type="evidence at protein level"/>
<gene>
    <name type="primary">RpL7</name>
    <name type="ORF">CG4897</name>
</gene>
<feature type="chain" id="PRO_0000104638" description="Large ribosomal subunit protein uL30">
    <location>
        <begin position="1"/>
        <end position="252"/>
    </location>
</feature>
<protein>
    <recommendedName>
        <fullName evidence="2">Large ribosomal subunit protein uL30</fullName>
    </recommendedName>
    <alternativeName>
        <fullName>60S ribosomal protein L7</fullName>
    </alternativeName>
</protein>
<keyword id="KW-0002">3D-structure</keyword>
<keyword id="KW-1185">Reference proteome</keyword>
<keyword id="KW-0687">Ribonucleoprotein</keyword>
<keyword id="KW-0689">Ribosomal protein</keyword>
<keyword id="KW-0694">RNA-binding</keyword>